<proteinExistence type="inferred from homology"/>
<evidence type="ECO:0000255" key="1">
    <source>
        <dbReference type="HAMAP-Rule" id="MF_00076"/>
    </source>
</evidence>
<sequence>MRKADIVRETKETRVALTVDLDGTGRSAISTGIGFLDHMLDLLARHARFDLEIKADGDLHVDFHHTTEDVGIVLGQALKKALGDMRGITRYADVLLPMDETLTRVALDISGRPFLVFRTEFAVPKIGEFDTELVREFFQAFASSAGVTLHVETLYGVNAHHIAESCFKGLARVLRAAVAVDPAAAGEIPSTKGALGT</sequence>
<dbReference type="EC" id="4.2.1.19" evidence="1"/>
<dbReference type="EMBL" id="CP000781">
    <property type="protein sequence ID" value="ABS67536.1"/>
    <property type="molecule type" value="Genomic_DNA"/>
</dbReference>
<dbReference type="SMR" id="A7IHP3"/>
<dbReference type="STRING" id="78245.Xaut_2293"/>
<dbReference type="KEGG" id="xau:Xaut_2293"/>
<dbReference type="eggNOG" id="COG0131">
    <property type="taxonomic scope" value="Bacteria"/>
</dbReference>
<dbReference type="HOGENOM" id="CLU_044308_3_0_5"/>
<dbReference type="OrthoDB" id="9813612at2"/>
<dbReference type="PhylomeDB" id="A7IHP3"/>
<dbReference type="UniPathway" id="UPA00031">
    <property type="reaction ID" value="UER00011"/>
</dbReference>
<dbReference type="Proteomes" id="UP000002417">
    <property type="component" value="Chromosome"/>
</dbReference>
<dbReference type="GO" id="GO:0005737">
    <property type="term" value="C:cytoplasm"/>
    <property type="evidence" value="ECO:0007669"/>
    <property type="project" value="UniProtKB-SubCell"/>
</dbReference>
<dbReference type="GO" id="GO:0004424">
    <property type="term" value="F:imidazoleglycerol-phosphate dehydratase activity"/>
    <property type="evidence" value="ECO:0007669"/>
    <property type="project" value="UniProtKB-UniRule"/>
</dbReference>
<dbReference type="GO" id="GO:0000105">
    <property type="term" value="P:L-histidine biosynthetic process"/>
    <property type="evidence" value="ECO:0007669"/>
    <property type="project" value="UniProtKB-UniRule"/>
</dbReference>
<dbReference type="CDD" id="cd07914">
    <property type="entry name" value="IGPD"/>
    <property type="match status" value="1"/>
</dbReference>
<dbReference type="FunFam" id="3.30.230.40:FF:000001">
    <property type="entry name" value="Imidazoleglycerol-phosphate dehydratase HisB"/>
    <property type="match status" value="1"/>
</dbReference>
<dbReference type="FunFam" id="3.30.230.40:FF:000003">
    <property type="entry name" value="Imidazoleglycerol-phosphate dehydratase HisB"/>
    <property type="match status" value="1"/>
</dbReference>
<dbReference type="Gene3D" id="3.30.230.40">
    <property type="entry name" value="Imidazole glycerol phosphate dehydratase, domain 1"/>
    <property type="match status" value="2"/>
</dbReference>
<dbReference type="HAMAP" id="MF_00076">
    <property type="entry name" value="HisB"/>
    <property type="match status" value="1"/>
</dbReference>
<dbReference type="InterPro" id="IPR038494">
    <property type="entry name" value="IGPD_sf"/>
</dbReference>
<dbReference type="InterPro" id="IPR000807">
    <property type="entry name" value="ImidazoleglycerolP_deHydtase"/>
</dbReference>
<dbReference type="InterPro" id="IPR020565">
    <property type="entry name" value="ImidazoleglycerP_deHydtase_CS"/>
</dbReference>
<dbReference type="InterPro" id="IPR020568">
    <property type="entry name" value="Ribosomal_Su5_D2-typ_SF"/>
</dbReference>
<dbReference type="NCBIfam" id="NF002109">
    <property type="entry name" value="PRK00951.1-5"/>
    <property type="match status" value="1"/>
</dbReference>
<dbReference type="NCBIfam" id="NF002111">
    <property type="entry name" value="PRK00951.2-1"/>
    <property type="match status" value="1"/>
</dbReference>
<dbReference type="NCBIfam" id="NF002114">
    <property type="entry name" value="PRK00951.2-4"/>
    <property type="match status" value="1"/>
</dbReference>
<dbReference type="PANTHER" id="PTHR23133:SF2">
    <property type="entry name" value="IMIDAZOLEGLYCEROL-PHOSPHATE DEHYDRATASE"/>
    <property type="match status" value="1"/>
</dbReference>
<dbReference type="PANTHER" id="PTHR23133">
    <property type="entry name" value="IMIDAZOLEGLYCEROL-PHOSPHATE DEHYDRATASE HIS7"/>
    <property type="match status" value="1"/>
</dbReference>
<dbReference type="Pfam" id="PF00475">
    <property type="entry name" value="IGPD"/>
    <property type="match status" value="1"/>
</dbReference>
<dbReference type="SUPFAM" id="SSF54211">
    <property type="entry name" value="Ribosomal protein S5 domain 2-like"/>
    <property type="match status" value="2"/>
</dbReference>
<dbReference type="PROSITE" id="PS00954">
    <property type="entry name" value="IGP_DEHYDRATASE_1"/>
    <property type="match status" value="1"/>
</dbReference>
<dbReference type="PROSITE" id="PS00955">
    <property type="entry name" value="IGP_DEHYDRATASE_2"/>
    <property type="match status" value="1"/>
</dbReference>
<reference key="1">
    <citation type="submission" date="2007-07" db="EMBL/GenBank/DDBJ databases">
        <title>Complete sequence of chromosome of Xanthobacter autotrophicus Py2.</title>
        <authorList>
            <consortium name="US DOE Joint Genome Institute"/>
            <person name="Copeland A."/>
            <person name="Lucas S."/>
            <person name="Lapidus A."/>
            <person name="Barry K."/>
            <person name="Glavina del Rio T."/>
            <person name="Hammon N."/>
            <person name="Israni S."/>
            <person name="Dalin E."/>
            <person name="Tice H."/>
            <person name="Pitluck S."/>
            <person name="Sims D."/>
            <person name="Brettin T."/>
            <person name="Bruce D."/>
            <person name="Detter J.C."/>
            <person name="Han C."/>
            <person name="Tapia R."/>
            <person name="Brainard J."/>
            <person name="Schmutz J."/>
            <person name="Larimer F."/>
            <person name="Land M."/>
            <person name="Hauser L."/>
            <person name="Kyrpides N."/>
            <person name="Kim E."/>
            <person name="Ensigns S.A."/>
            <person name="Richardson P."/>
        </authorList>
    </citation>
    <scope>NUCLEOTIDE SEQUENCE [LARGE SCALE GENOMIC DNA]</scope>
    <source>
        <strain>ATCC BAA-1158 / Py2</strain>
    </source>
</reference>
<name>HIS7_XANP2</name>
<keyword id="KW-0028">Amino-acid biosynthesis</keyword>
<keyword id="KW-0963">Cytoplasm</keyword>
<keyword id="KW-0368">Histidine biosynthesis</keyword>
<keyword id="KW-0456">Lyase</keyword>
<keyword id="KW-1185">Reference proteome</keyword>
<gene>
    <name evidence="1" type="primary">hisB</name>
    <name type="ordered locus">Xaut_2293</name>
</gene>
<accession>A7IHP3</accession>
<comment type="catalytic activity">
    <reaction evidence="1">
        <text>D-erythro-1-(imidazol-4-yl)glycerol 3-phosphate = 3-(imidazol-4-yl)-2-oxopropyl phosphate + H2O</text>
        <dbReference type="Rhea" id="RHEA:11040"/>
        <dbReference type="ChEBI" id="CHEBI:15377"/>
        <dbReference type="ChEBI" id="CHEBI:57766"/>
        <dbReference type="ChEBI" id="CHEBI:58278"/>
        <dbReference type="EC" id="4.2.1.19"/>
    </reaction>
</comment>
<comment type="pathway">
    <text evidence="1">Amino-acid biosynthesis; L-histidine biosynthesis; L-histidine from 5-phospho-alpha-D-ribose 1-diphosphate: step 6/9.</text>
</comment>
<comment type="subcellular location">
    <subcellularLocation>
        <location evidence="1">Cytoplasm</location>
    </subcellularLocation>
</comment>
<comment type="similarity">
    <text evidence="1">Belongs to the imidazoleglycerol-phosphate dehydratase family.</text>
</comment>
<feature type="chain" id="PRO_1000092721" description="Imidazoleglycerol-phosphate dehydratase">
    <location>
        <begin position="1"/>
        <end position="197"/>
    </location>
</feature>
<organism>
    <name type="scientific">Xanthobacter autotrophicus (strain ATCC BAA-1158 / Py2)</name>
    <dbReference type="NCBI Taxonomy" id="78245"/>
    <lineage>
        <taxon>Bacteria</taxon>
        <taxon>Pseudomonadati</taxon>
        <taxon>Pseudomonadota</taxon>
        <taxon>Alphaproteobacteria</taxon>
        <taxon>Hyphomicrobiales</taxon>
        <taxon>Xanthobacteraceae</taxon>
        <taxon>Xanthobacter</taxon>
    </lineage>
</organism>
<protein>
    <recommendedName>
        <fullName evidence="1">Imidazoleglycerol-phosphate dehydratase</fullName>
        <shortName evidence="1">IGPD</shortName>
        <ecNumber evidence="1">4.2.1.19</ecNumber>
    </recommendedName>
</protein>